<proteinExistence type="inferred from homology"/>
<sequence length="620" mass="69566">MIEVPEDNRSSQTKRKNTEKNCNELMVDEKMDDDSSPRDEMKDKLKGTKSLIIRKSELMAKKYDTWQLKAIFLFSAFICTFAYGLDSSIRGTYMTYAMNSYSAHSLISTVSVIVLMISAVSQVIFGGLSDIFGRLTLFLVSIVLYIVGTIIQSQAYDVQRYAAGAVFYYVGLVGVMLQVVLMLSDNSSLKWRLFYTLIPSWPSIITTWVSGSVVEAANPLENWSWNIAMWAFIFPLCCIPLILCMLHMRWKVRNDVEWKELQDEKSYYQTHGLVQMLVQLFWKLDVVGVLLFTAGVGCILVPLTLAGGVSTNWRNSKIIGPFVLGFVLVPGFIYWESRLALVPFAPFKLLKDRGVWAPLGIMFFICFVYQMAAGYLYTILVVAVDESASSATRIINLYSFVTAVVAPFLGLIVTRSSRLKSYIIFGGSLYFITMGLFYRYRSGQDADGGIIAGMVIWGLSSCLFDYPTIVSIQSVTSHENMATVTALNYTVFRIGGAVAAAISGAIWTQSLYPKLLHYMGDADLATAAYGSPLTFILSNPWGTPVRSAMVEAYRHVQKYEVIVALVFSAPMFLLTFCVRDPRLTEDFAQKLPDREYVQTKEDDPINDWIAKRFAKALGRS</sequence>
<evidence type="ECO:0000250" key="1"/>
<evidence type="ECO:0000255" key="2"/>
<evidence type="ECO:0000256" key="3">
    <source>
        <dbReference type="SAM" id="MobiDB-lite"/>
    </source>
</evidence>
<evidence type="ECO:0000269" key="4">
    <source>
    </source>
</evidence>
<evidence type="ECO:0000269" key="5">
    <source>
    </source>
</evidence>
<evidence type="ECO:0000305" key="6"/>
<keyword id="KW-0967">Endosome</keyword>
<keyword id="KW-0406">Ion transport</keyword>
<keyword id="KW-0408">Iron</keyword>
<keyword id="KW-0410">Iron transport</keyword>
<keyword id="KW-0472">Membrane</keyword>
<keyword id="KW-1185">Reference proteome</keyword>
<keyword id="KW-0812">Transmembrane</keyword>
<keyword id="KW-1133">Transmembrane helix</keyword>
<keyword id="KW-0813">Transport</keyword>
<protein>
    <recommendedName>
        <fullName>Siderophore iron transporter ARN2</fullName>
    </recommendedName>
    <alternativeName>
        <fullName>Triacetylfusarinine C permease</fullName>
    </alternativeName>
    <alternativeName>
        <fullName>Triacetylfusarinine C transporter 1</fullName>
    </alternativeName>
</protein>
<reference key="1">
    <citation type="journal article" date="1994" name="Science">
        <title>Complete nucleotide sequence of Saccharomyces cerevisiae chromosome VIII.</title>
        <authorList>
            <person name="Johnston M."/>
            <person name="Andrews S."/>
            <person name="Brinkman R."/>
            <person name="Cooper J."/>
            <person name="Ding H."/>
            <person name="Dover J."/>
            <person name="Du Z."/>
            <person name="Favello A."/>
            <person name="Fulton L."/>
            <person name="Gattung S."/>
            <person name="Geisel C."/>
            <person name="Kirsten J."/>
            <person name="Kucaba T."/>
            <person name="Hillier L.W."/>
            <person name="Jier M."/>
            <person name="Johnston L."/>
            <person name="Langston Y."/>
            <person name="Latreille P."/>
            <person name="Louis E.J."/>
            <person name="Macri C."/>
            <person name="Mardis E."/>
            <person name="Menezes S."/>
            <person name="Mouser L."/>
            <person name="Nhan M."/>
            <person name="Rifkin L."/>
            <person name="Riles L."/>
            <person name="St Peter H."/>
            <person name="Trevaskis E."/>
            <person name="Vaughan K."/>
            <person name="Vignati D."/>
            <person name="Wilcox L."/>
            <person name="Wohldman P."/>
            <person name="Waterston R."/>
            <person name="Wilson R."/>
            <person name="Vaudin M."/>
        </authorList>
    </citation>
    <scope>NUCLEOTIDE SEQUENCE [LARGE SCALE GENOMIC DNA]</scope>
    <source>
        <strain>ATCC 204508 / S288c</strain>
    </source>
</reference>
<reference key="2">
    <citation type="journal article" date="2014" name="G3 (Bethesda)">
        <title>The reference genome sequence of Saccharomyces cerevisiae: Then and now.</title>
        <authorList>
            <person name="Engel S.R."/>
            <person name="Dietrich F.S."/>
            <person name="Fisk D.G."/>
            <person name="Binkley G."/>
            <person name="Balakrishnan R."/>
            <person name="Costanzo M.C."/>
            <person name="Dwight S.S."/>
            <person name="Hitz B.C."/>
            <person name="Karra K."/>
            <person name="Nash R.S."/>
            <person name="Weng S."/>
            <person name="Wong E.D."/>
            <person name="Lloyd P."/>
            <person name="Skrzypek M.S."/>
            <person name="Miyasato S.R."/>
            <person name="Simison M."/>
            <person name="Cherry J.M."/>
        </authorList>
    </citation>
    <scope>GENOME REANNOTATION</scope>
    <scope>SEQUENCE REVISION TO 619</scope>
    <source>
        <strain>ATCC 204508 / S288c</strain>
    </source>
</reference>
<reference key="3">
    <citation type="journal article" date="1999" name="BioMetals">
        <title>Identification of a fungal triacetylfusarinine C siderophore transport gene (TAF1) in Saccharomyces cerevisiae as a member of the major facilitator superfamily.</title>
        <authorList>
            <person name="Heymann P."/>
            <person name="Ernst J.F."/>
            <person name="Winkelmann G."/>
        </authorList>
    </citation>
    <scope>FUNCTION</scope>
</reference>
<reference key="4">
    <citation type="journal article" date="2000" name="J. Biol. Chem.">
        <title>Desferrioxamine-mediated iron uptake in Saccharomyces cerevisiae. Evidence for two pathways of iron uptake.</title>
        <authorList>
            <person name="Yun C.-W."/>
            <person name="Ferea T."/>
            <person name="Rashford J."/>
            <person name="Ardon O."/>
            <person name="Brown P.O."/>
            <person name="Botstein D."/>
            <person name="Kaplan J."/>
            <person name="Philpott C.C."/>
        </authorList>
    </citation>
    <scope>FUNCTION</scope>
</reference>
<accession>P38724</accession>
<accession>D3DKS4</accession>
<gene>
    <name type="primary">ARN2</name>
    <name type="synonym">TAF1</name>
    <name type="ordered locus">YHL047C</name>
</gene>
<dbReference type="EMBL" id="U11583">
    <property type="protein sequence ID" value="AAB65059.1"/>
    <property type="status" value="ALT_FRAME"/>
    <property type="molecule type" value="Genomic_DNA"/>
</dbReference>
<dbReference type="EMBL" id="BK006934">
    <property type="protein sequence ID" value="DAA06641.2"/>
    <property type="molecule type" value="Genomic_DNA"/>
</dbReference>
<dbReference type="PIR" id="S48921">
    <property type="entry name" value="S48921"/>
</dbReference>
<dbReference type="RefSeq" id="NP_011816.2">
    <property type="nucleotide sequence ID" value="NM_001179127.2"/>
</dbReference>
<dbReference type="SMR" id="P38724"/>
<dbReference type="BioGRID" id="36378">
    <property type="interactions" value="25"/>
</dbReference>
<dbReference type="DIP" id="DIP-7479N"/>
<dbReference type="FunCoup" id="P38724">
    <property type="interactions" value="72"/>
</dbReference>
<dbReference type="STRING" id="4932.YHL047C"/>
<dbReference type="TCDB" id="2.A.1.16.3">
    <property type="family name" value="the major facilitator superfamily (mfs)"/>
</dbReference>
<dbReference type="PaxDb" id="4932-YHL047C"/>
<dbReference type="PeptideAtlas" id="P38724"/>
<dbReference type="EnsemblFungi" id="YHL047C_mRNA">
    <property type="protein sequence ID" value="YHL047C"/>
    <property type="gene ID" value="YHL047C"/>
</dbReference>
<dbReference type="GeneID" id="856338"/>
<dbReference type="KEGG" id="sce:YHL047C"/>
<dbReference type="AGR" id="SGD:S000001039"/>
<dbReference type="SGD" id="S000001039">
    <property type="gene designation" value="ARN2"/>
</dbReference>
<dbReference type="VEuPathDB" id="FungiDB:YHL047C"/>
<dbReference type="eggNOG" id="KOG0254">
    <property type="taxonomic scope" value="Eukaryota"/>
</dbReference>
<dbReference type="GeneTree" id="ENSGT00940000176305"/>
<dbReference type="HOGENOM" id="CLU_012970_2_1_1"/>
<dbReference type="InParanoid" id="P38724"/>
<dbReference type="OMA" id="SIGMWAF"/>
<dbReference type="OrthoDB" id="2241241at2759"/>
<dbReference type="BioCyc" id="YEAST:G3O-31063-MONOMER"/>
<dbReference type="BioGRID-ORCS" id="856338">
    <property type="hits" value="5 hits in 10 CRISPR screens"/>
</dbReference>
<dbReference type="PRO" id="PR:P38724"/>
<dbReference type="Proteomes" id="UP000002311">
    <property type="component" value="Chromosome VIII"/>
</dbReference>
<dbReference type="RNAct" id="P38724">
    <property type="molecule type" value="protein"/>
</dbReference>
<dbReference type="GO" id="GO:0005768">
    <property type="term" value="C:endosome"/>
    <property type="evidence" value="ECO:0000318"/>
    <property type="project" value="GO_Central"/>
</dbReference>
<dbReference type="GO" id="GO:0010008">
    <property type="term" value="C:endosome membrane"/>
    <property type="evidence" value="ECO:0007669"/>
    <property type="project" value="UniProtKB-SubCell"/>
</dbReference>
<dbReference type="GO" id="GO:0000324">
    <property type="term" value="C:fungal-type vacuole"/>
    <property type="evidence" value="ECO:0007005"/>
    <property type="project" value="SGD"/>
</dbReference>
<dbReference type="GO" id="GO:0005886">
    <property type="term" value="C:plasma membrane"/>
    <property type="evidence" value="ECO:0000318"/>
    <property type="project" value="GO_Central"/>
</dbReference>
<dbReference type="GO" id="GO:0005774">
    <property type="term" value="C:vacuolar membrane"/>
    <property type="evidence" value="ECO:0000318"/>
    <property type="project" value="GO_Central"/>
</dbReference>
<dbReference type="GO" id="GO:0015343">
    <property type="term" value="F:siderophore-iron transmembrane transporter activity"/>
    <property type="evidence" value="ECO:0000314"/>
    <property type="project" value="SGD"/>
</dbReference>
<dbReference type="GO" id="GO:0006879">
    <property type="term" value="P:intracellular iron ion homeostasis"/>
    <property type="evidence" value="ECO:0000315"/>
    <property type="project" value="SGD"/>
</dbReference>
<dbReference type="GO" id="GO:0009237">
    <property type="term" value="P:siderophore metabolic process"/>
    <property type="evidence" value="ECO:0000315"/>
    <property type="project" value="SGD"/>
</dbReference>
<dbReference type="GO" id="GO:0015891">
    <property type="term" value="P:siderophore transport"/>
    <property type="evidence" value="ECO:0000314"/>
    <property type="project" value="SGD"/>
</dbReference>
<dbReference type="GO" id="GO:0055085">
    <property type="term" value="P:transmembrane transport"/>
    <property type="evidence" value="ECO:0000318"/>
    <property type="project" value="GO_Central"/>
</dbReference>
<dbReference type="CDD" id="cd17322">
    <property type="entry name" value="MFS_ARN_like"/>
    <property type="match status" value="1"/>
</dbReference>
<dbReference type="FunFam" id="1.20.1250.20:FF:000197">
    <property type="entry name" value="Siderophore iron transporter 1"/>
    <property type="match status" value="1"/>
</dbReference>
<dbReference type="Gene3D" id="1.20.1250.20">
    <property type="entry name" value="MFS general substrate transporter like domains"/>
    <property type="match status" value="2"/>
</dbReference>
<dbReference type="InterPro" id="IPR011701">
    <property type="entry name" value="MFS"/>
</dbReference>
<dbReference type="InterPro" id="IPR020846">
    <property type="entry name" value="MFS_dom"/>
</dbReference>
<dbReference type="InterPro" id="IPR036259">
    <property type="entry name" value="MFS_trans_sf"/>
</dbReference>
<dbReference type="PANTHER" id="PTHR23501:SF92">
    <property type="entry name" value="GLUTATHIONE EXCHANGER 1-RELATED"/>
    <property type="match status" value="1"/>
</dbReference>
<dbReference type="PANTHER" id="PTHR23501">
    <property type="entry name" value="MAJOR FACILITATOR SUPERFAMILY"/>
    <property type="match status" value="1"/>
</dbReference>
<dbReference type="Pfam" id="PF07690">
    <property type="entry name" value="MFS_1"/>
    <property type="match status" value="1"/>
</dbReference>
<dbReference type="SUPFAM" id="SSF103473">
    <property type="entry name" value="MFS general substrate transporter"/>
    <property type="match status" value="1"/>
</dbReference>
<dbReference type="PROSITE" id="PS50850">
    <property type="entry name" value="MFS"/>
    <property type="match status" value="1"/>
</dbReference>
<organism>
    <name type="scientific">Saccharomyces cerevisiae (strain ATCC 204508 / S288c)</name>
    <name type="common">Baker's yeast</name>
    <dbReference type="NCBI Taxonomy" id="559292"/>
    <lineage>
        <taxon>Eukaryota</taxon>
        <taxon>Fungi</taxon>
        <taxon>Dikarya</taxon>
        <taxon>Ascomycota</taxon>
        <taxon>Saccharomycotina</taxon>
        <taxon>Saccharomycetes</taxon>
        <taxon>Saccharomycetales</taxon>
        <taxon>Saccharomycetaceae</taxon>
        <taxon>Saccharomyces</taxon>
    </lineage>
</organism>
<feature type="chain" id="PRO_0000084863" description="Siderophore iron transporter ARN2">
    <location>
        <begin position="1"/>
        <end position="620"/>
    </location>
</feature>
<feature type="transmembrane region" description="Helical" evidence="2">
    <location>
        <begin position="71"/>
        <end position="93"/>
    </location>
</feature>
<feature type="transmembrane region" description="Helical" evidence="2">
    <location>
        <begin position="106"/>
        <end position="128"/>
    </location>
</feature>
<feature type="transmembrane region" description="Helical" evidence="2">
    <location>
        <begin position="135"/>
        <end position="152"/>
    </location>
</feature>
<feature type="transmembrane region" description="Helical" evidence="2">
    <location>
        <begin position="162"/>
        <end position="184"/>
    </location>
</feature>
<feature type="transmembrane region" description="Helical" evidence="2">
    <location>
        <begin position="191"/>
        <end position="213"/>
    </location>
</feature>
<feature type="transmembrane region" description="Helical" evidence="2">
    <location>
        <begin position="223"/>
        <end position="245"/>
    </location>
</feature>
<feature type="transmembrane region" description="Helical" evidence="2">
    <location>
        <begin position="286"/>
        <end position="308"/>
    </location>
</feature>
<feature type="transmembrane region" description="Helical" evidence="2">
    <location>
        <begin position="318"/>
        <end position="335"/>
    </location>
</feature>
<feature type="transmembrane region" description="Helical" evidence="2">
    <location>
        <begin position="355"/>
        <end position="377"/>
    </location>
</feature>
<feature type="transmembrane region" description="Helical" evidence="2">
    <location>
        <begin position="392"/>
        <end position="414"/>
    </location>
</feature>
<feature type="transmembrane region" description="Helical" evidence="2">
    <location>
        <begin position="421"/>
        <end position="438"/>
    </location>
</feature>
<feature type="transmembrane region" description="Helical" evidence="2">
    <location>
        <begin position="448"/>
        <end position="470"/>
    </location>
</feature>
<feature type="transmembrane region" description="Helical" evidence="2">
    <location>
        <begin position="491"/>
        <end position="513"/>
    </location>
</feature>
<feature type="transmembrane region" description="Helical" evidence="2">
    <location>
        <begin position="561"/>
        <end position="578"/>
    </location>
</feature>
<feature type="region of interest" description="Disordered" evidence="3">
    <location>
        <begin position="1"/>
        <end position="42"/>
    </location>
</feature>
<feature type="compositionally biased region" description="Basic and acidic residues" evidence="3">
    <location>
        <begin position="16"/>
        <end position="42"/>
    </location>
</feature>
<comment type="function">
    <text evidence="4 5">Involved in the transport of siderophore triacestylfusarinine C and so has a role in iron homeostasis.</text>
</comment>
<comment type="subcellular location">
    <subcellularLocation>
        <location evidence="1">Endosome membrane</location>
        <topology evidence="1">Multi-pass membrane protein</topology>
    </subcellularLocation>
</comment>
<comment type="similarity">
    <text evidence="6">Belongs to the major facilitator superfamily.</text>
</comment>
<comment type="sequence caution" evidence="6">
    <conflict type="frameshift">
        <sequence resource="EMBL-CDS" id="AAB65059"/>
    </conflict>
</comment>
<name>ARN2_YEAST</name>